<reference key="1">
    <citation type="journal article" date="2007" name="PLoS ONE">
        <title>Analysis of the neurotoxin complex genes in Clostridium botulinum A1-A4 and B1 strains: BoNT/A3, /Ba4 and /B1 clusters are located within plasmids.</title>
        <authorList>
            <person name="Smith T.J."/>
            <person name="Hill K.K."/>
            <person name="Foley B.T."/>
            <person name="Detter J.C."/>
            <person name="Munk A.C."/>
            <person name="Bruce D.C."/>
            <person name="Doggett N.A."/>
            <person name="Smith L.A."/>
            <person name="Marks J.D."/>
            <person name="Xie G."/>
            <person name="Brettin T.S."/>
        </authorList>
    </citation>
    <scope>NUCLEOTIDE SEQUENCE [LARGE SCALE GENOMIC DNA]</scope>
    <source>
        <strain>ATCC 19397 / Type A</strain>
    </source>
</reference>
<organism>
    <name type="scientific">Clostridium botulinum (strain ATCC 19397 / Type A)</name>
    <dbReference type="NCBI Taxonomy" id="441770"/>
    <lineage>
        <taxon>Bacteria</taxon>
        <taxon>Bacillati</taxon>
        <taxon>Bacillota</taxon>
        <taxon>Clostridia</taxon>
        <taxon>Eubacteriales</taxon>
        <taxon>Clostridiaceae</taxon>
        <taxon>Clostridium</taxon>
    </lineage>
</organism>
<evidence type="ECO:0000255" key="1">
    <source>
        <dbReference type="HAMAP-Rule" id="MF_01038"/>
    </source>
</evidence>
<feature type="chain" id="PRO_1000063953" description="2,3-bisphosphoglycerate-independent phosphoglycerate mutase">
    <location>
        <begin position="1"/>
        <end position="509"/>
    </location>
</feature>
<feature type="active site" description="Phosphoserine intermediate" evidence="1">
    <location>
        <position position="62"/>
    </location>
</feature>
<feature type="binding site" evidence="1">
    <location>
        <position position="12"/>
    </location>
    <ligand>
        <name>Mn(2+)</name>
        <dbReference type="ChEBI" id="CHEBI:29035"/>
        <label>2</label>
    </ligand>
</feature>
<feature type="binding site" evidence="1">
    <location>
        <position position="62"/>
    </location>
    <ligand>
        <name>Mn(2+)</name>
        <dbReference type="ChEBI" id="CHEBI:29035"/>
        <label>2</label>
    </ligand>
</feature>
<feature type="binding site" evidence="1">
    <location>
        <position position="123"/>
    </location>
    <ligand>
        <name>substrate</name>
    </ligand>
</feature>
<feature type="binding site" evidence="1">
    <location>
        <begin position="153"/>
        <end position="154"/>
    </location>
    <ligand>
        <name>substrate</name>
    </ligand>
</feature>
<feature type="binding site" evidence="1">
    <location>
        <position position="185"/>
    </location>
    <ligand>
        <name>substrate</name>
    </ligand>
</feature>
<feature type="binding site" evidence="1">
    <location>
        <position position="191"/>
    </location>
    <ligand>
        <name>substrate</name>
    </ligand>
</feature>
<feature type="binding site" evidence="1">
    <location>
        <begin position="260"/>
        <end position="263"/>
    </location>
    <ligand>
        <name>substrate</name>
    </ligand>
</feature>
<feature type="binding site" evidence="1">
    <location>
        <position position="333"/>
    </location>
    <ligand>
        <name>substrate</name>
    </ligand>
</feature>
<feature type="binding site" evidence="1">
    <location>
        <position position="400"/>
    </location>
    <ligand>
        <name>Mn(2+)</name>
        <dbReference type="ChEBI" id="CHEBI:29035"/>
        <label>1</label>
    </ligand>
</feature>
<feature type="binding site" evidence="1">
    <location>
        <position position="404"/>
    </location>
    <ligand>
        <name>Mn(2+)</name>
        <dbReference type="ChEBI" id="CHEBI:29035"/>
        <label>1</label>
    </ligand>
</feature>
<feature type="binding site" evidence="1">
    <location>
        <position position="441"/>
    </location>
    <ligand>
        <name>Mn(2+)</name>
        <dbReference type="ChEBI" id="CHEBI:29035"/>
        <label>2</label>
    </ligand>
</feature>
<feature type="binding site" evidence="1">
    <location>
        <position position="442"/>
    </location>
    <ligand>
        <name>Mn(2+)</name>
        <dbReference type="ChEBI" id="CHEBI:29035"/>
        <label>2</label>
    </ligand>
</feature>
<feature type="binding site" evidence="1">
    <location>
        <position position="460"/>
    </location>
    <ligand>
        <name>Mn(2+)</name>
        <dbReference type="ChEBI" id="CHEBI:29035"/>
        <label>1</label>
    </ligand>
</feature>
<name>GPMI_CLOB1</name>
<accession>A7FQN9</accession>
<keyword id="KW-0324">Glycolysis</keyword>
<keyword id="KW-0413">Isomerase</keyword>
<keyword id="KW-0464">Manganese</keyword>
<keyword id="KW-0479">Metal-binding</keyword>
<protein>
    <recommendedName>
        <fullName evidence="1">2,3-bisphosphoglycerate-independent phosphoglycerate mutase</fullName>
        <shortName evidence="1">BPG-independent PGAM</shortName>
        <shortName evidence="1">Phosphoglyceromutase</shortName>
        <shortName evidence="1">iPGM</shortName>
        <ecNumber evidence="1">5.4.2.12</ecNumber>
    </recommendedName>
</protein>
<gene>
    <name evidence="1" type="primary">gpmI</name>
    <name type="ordered locus">CLB_0270</name>
</gene>
<sequence length="509" mass="56520">MSKKPVVLMILDGFGLTNKVDGNAVSAANKPNLDNILKKYPHTQLGASGMDVGLPEGQMGNSEVGHLNIGAGRIVYQALTKITKSISDGDFFENVALNKAIENVKKNNSTLHLLGLLSPGGVHSHIDHLKGLIKLAKEKDIKKVYIHAFLDGRDVAPSSAKEYIEDIENYMNEIGVGEIATISGRYYAMDRDKRWERVQLCYNAIVLGKGEEANSAVEGLEKSYRDNKTDEFVLPSVVLKEGKPKAKIENKDSVVFFNFRPDRARELTRAINDKVFDGFERETLDLTYVTVTEYDSTLENVEVAFPPEHLNNTLGEYVSKNGKKQLRIAETEKYAHVTFFFNGGVEEPNEGEDRVLIPSPKVATYDMQPEMNAYEVTDKLLERLDEDKYDMVILNFANPDMVGHTGVFEAAKKAIETVDECVGKIVNKVLEKDGTAFITADHGNSEEMIDYSTGKPMTAHTTNPVPFMYVSKNSKELREGGKLADIAPTMLQLMNLPKPSEMTGNSLIK</sequence>
<dbReference type="EC" id="5.4.2.12" evidence="1"/>
<dbReference type="EMBL" id="CP000726">
    <property type="protein sequence ID" value="ABS35511.1"/>
    <property type="molecule type" value="Genomic_DNA"/>
</dbReference>
<dbReference type="RefSeq" id="WP_011986048.1">
    <property type="nucleotide sequence ID" value="NC_009697.1"/>
</dbReference>
<dbReference type="SMR" id="A7FQN9"/>
<dbReference type="KEGG" id="cba:CLB_0270"/>
<dbReference type="HOGENOM" id="CLU_026099_2_0_9"/>
<dbReference type="UniPathway" id="UPA00109">
    <property type="reaction ID" value="UER00186"/>
</dbReference>
<dbReference type="GO" id="GO:0005829">
    <property type="term" value="C:cytosol"/>
    <property type="evidence" value="ECO:0007669"/>
    <property type="project" value="TreeGrafter"/>
</dbReference>
<dbReference type="GO" id="GO:0030145">
    <property type="term" value="F:manganese ion binding"/>
    <property type="evidence" value="ECO:0007669"/>
    <property type="project" value="UniProtKB-UniRule"/>
</dbReference>
<dbReference type="GO" id="GO:0004619">
    <property type="term" value="F:phosphoglycerate mutase activity"/>
    <property type="evidence" value="ECO:0007669"/>
    <property type="project" value="UniProtKB-EC"/>
</dbReference>
<dbReference type="GO" id="GO:0006007">
    <property type="term" value="P:glucose catabolic process"/>
    <property type="evidence" value="ECO:0007669"/>
    <property type="project" value="InterPro"/>
</dbReference>
<dbReference type="GO" id="GO:0006096">
    <property type="term" value="P:glycolytic process"/>
    <property type="evidence" value="ECO:0007669"/>
    <property type="project" value="UniProtKB-UniRule"/>
</dbReference>
<dbReference type="CDD" id="cd16010">
    <property type="entry name" value="iPGM"/>
    <property type="match status" value="1"/>
</dbReference>
<dbReference type="FunFam" id="3.40.1450.10:FF:000001">
    <property type="entry name" value="2,3-bisphosphoglycerate-independent phosphoglycerate mutase"/>
    <property type="match status" value="1"/>
</dbReference>
<dbReference type="FunFam" id="3.40.720.10:FF:000001">
    <property type="entry name" value="2,3-bisphosphoglycerate-independent phosphoglycerate mutase"/>
    <property type="match status" value="1"/>
</dbReference>
<dbReference type="Gene3D" id="3.40.720.10">
    <property type="entry name" value="Alkaline Phosphatase, subunit A"/>
    <property type="match status" value="1"/>
</dbReference>
<dbReference type="Gene3D" id="3.40.1450.10">
    <property type="entry name" value="BPG-independent phosphoglycerate mutase, domain B"/>
    <property type="match status" value="1"/>
</dbReference>
<dbReference type="HAMAP" id="MF_01038">
    <property type="entry name" value="GpmI"/>
    <property type="match status" value="1"/>
</dbReference>
<dbReference type="InterPro" id="IPR017850">
    <property type="entry name" value="Alkaline_phosphatase_core_sf"/>
</dbReference>
<dbReference type="InterPro" id="IPR011258">
    <property type="entry name" value="BPG-indep_PGM_N"/>
</dbReference>
<dbReference type="InterPro" id="IPR006124">
    <property type="entry name" value="Metalloenzyme"/>
</dbReference>
<dbReference type="InterPro" id="IPR036646">
    <property type="entry name" value="PGAM_B_sf"/>
</dbReference>
<dbReference type="InterPro" id="IPR005995">
    <property type="entry name" value="Pgm_bpd_ind"/>
</dbReference>
<dbReference type="NCBIfam" id="TIGR01307">
    <property type="entry name" value="pgm_bpd_ind"/>
    <property type="match status" value="1"/>
</dbReference>
<dbReference type="PANTHER" id="PTHR31637">
    <property type="entry name" value="2,3-BISPHOSPHOGLYCERATE-INDEPENDENT PHOSPHOGLYCERATE MUTASE"/>
    <property type="match status" value="1"/>
</dbReference>
<dbReference type="PANTHER" id="PTHR31637:SF0">
    <property type="entry name" value="2,3-BISPHOSPHOGLYCERATE-INDEPENDENT PHOSPHOGLYCERATE MUTASE"/>
    <property type="match status" value="1"/>
</dbReference>
<dbReference type="Pfam" id="PF06415">
    <property type="entry name" value="iPGM_N"/>
    <property type="match status" value="1"/>
</dbReference>
<dbReference type="Pfam" id="PF01676">
    <property type="entry name" value="Metalloenzyme"/>
    <property type="match status" value="1"/>
</dbReference>
<dbReference type="PIRSF" id="PIRSF001492">
    <property type="entry name" value="IPGAM"/>
    <property type="match status" value="1"/>
</dbReference>
<dbReference type="SUPFAM" id="SSF64158">
    <property type="entry name" value="2,3-Bisphosphoglycerate-independent phosphoglycerate mutase, substrate-binding domain"/>
    <property type="match status" value="1"/>
</dbReference>
<dbReference type="SUPFAM" id="SSF53649">
    <property type="entry name" value="Alkaline phosphatase-like"/>
    <property type="match status" value="1"/>
</dbReference>
<proteinExistence type="inferred from homology"/>
<comment type="function">
    <text evidence="1">Catalyzes the interconversion of 2-phosphoglycerate and 3-phosphoglycerate.</text>
</comment>
<comment type="catalytic activity">
    <reaction evidence="1">
        <text>(2R)-2-phosphoglycerate = (2R)-3-phosphoglycerate</text>
        <dbReference type="Rhea" id="RHEA:15901"/>
        <dbReference type="ChEBI" id="CHEBI:58272"/>
        <dbReference type="ChEBI" id="CHEBI:58289"/>
        <dbReference type="EC" id="5.4.2.12"/>
    </reaction>
</comment>
<comment type="cofactor">
    <cofactor evidence="1">
        <name>Mn(2+)</name>
        <dbReference type="ChEBI" id="CHEBI:29035"/>
    </cofactor>
    <text evidence="1">Binds 2 manganese ions per subunit.</text>
</comment>
<comment type="pathway">
    <text evidence="1">Carbohydrate degradation; glycolysis; pyruvate from D-glyceraldehyde 3-phosphate: step 3/5.</text>
</comment>
<comment type="subunit">
    <text evidence="1">Monomer.</text>
</comment>
<comment type="similarity">
    <text evidence="1">Belongs to the BPG-independent phosphoglycerate mutase family.</text>
</comment>